<gene>
    <name evidence="1" type="primary">asnA</name>
    <name type="ordered locus">SUB1323</name>
</gene>
<feature type="chain" id="PRO_1000146700" description="Aspartate--ammonia ligase">
    <location>
        <begin position="1"/>
        <end position="330"/>
    </location>
</feature>
<reference key="1">
    <citation type="journal article" date="2009" name="BMC Genomics">
        <title>Evidence for niche adaptation in the genome of the bovine pathogen Streptococcus uberis.</title>
        <authorList>
            <person name="Ward P.N."/>
            <person name="Holden M.T.G."/>
            <person name="Leigh J.A."/>
            <person name="Lennard N."/>
            <person name="Bignell A."/>
            <person name="Barron A."/>
            <person name="Clark L."/>
            <person name="Quail M.A."/>
            <person name="Woodward J."/>
            <person name="Barrell B.G."/>
            <person name="Egan S.A."/>
            <person name="Field T.R."/>
            <person name="Maskell D."/>
            <person name="Kehoe M."/>
            <person name="Dowson C.G."/>
            <person name="Chanter N."/>
            <person name="Whatmore A.M."/>
            <person name="Bentley S.D."/>
            <person name="Parkhill J."/>
        </authorList>
    </citation>
    <scope>NUCLEOTIDE SEQUENCE [LARGE SCALE GENOMIC DNA]</scope>
    <source>
        <strain>ATCC BAA-854 / 0140J</strain>
    </source>
</reference>
<evidence type="ECO:0000255" key="1">
    <source>
        <dbReference type="HAMAP-Rule" id="MF_00555"/>
    </source>
</evidence>
<dbReference type="EC" id="6.3.1.1" evidence="1"/>
<dbReference type="EMBL" id="AM946015">
    <property type="protein sequence ID" value="CAR42875.1"/>
    <property type="molecule type" value="Genomic_DNA"/>
</dbReference>
<dbReference type="RefSeq" id="WP_015911648.1">
    <property type="nucleotide sequence ID" value="NC_012004.1"/>
</dbReference>
<dbReference type="SMR" id="B9DUY5"/>
<dbReference type="STRING" id="218495.SUB1323"/>
<dbReference type="KEGG" id="sub:SUB1323"/>
<dbReference type="eggNOG" id="COG2502">
    <property type="taxonomic scope" value="Bacteria"/>
</dbReference>
<dbReference type="HOGENOM" id="CLU_071543_0_0_9"/>
<dbReference type="OrthoDB" id="9766088at2"/>
<dbReference type="UniPathway" id="UPA00134">
    <property type="reaction ID" value="UER00194"/>
</dbReference>
<dbReference type="Proteomes" id="UP000000449">
    <property type="component" value="Chromosome"/>
</dbReference>
<dbReference type="GO" id="GO:0005829">
    <property type="term" value="C:cytosol"/>
    <property type="evidence" value="ECO:0007669"/>
    <property type="project" value="TreeGrafter"/>
</dbReference>
<dbReference type="GO" id="GO:0004071">
    <property type="term" value="F:aspartate-ammonia ligase activity"/>
    <property type="evidence" value="ECO:0007669"/>
    <property type="project" value="UniProtKB-UniRule"/>
</dbReference>
<dbReference type="GO" id="GO:0005524">
    <property type="term" value="F:ATP binding"/>
    <property type="evidence" value="ECO:0007669"/>
    <property type="project" value="UniProtKB-UniRule"/>
</dbReference>
<dbReference type="GO" id="GO:0140096">
    <property type="term" value="F:catalytic activity, acting on a protein"/>
    <property type="evidence" value="ECO:0007669"/>
    <property type="project" value="UniProtKB-ARBA"/>
</dbReference>
<dbReference type="GO" id="GO:0016740">
    <property type="term" value="F:transferase activity"/>
    <property type="evidence" value="ECO:0007669"/>
    <property type="project" value="UniProtKB-ARBA"/>
</dbReference>
<dbReference type="GO" id="GO:0070981">
    <property type="term" value="P:L-asparagine biosynthetic process"/>
    <property type="evidence" value="ECO:0007669"/>
    <property type="project" value="UniProtKB-UniRule"/>
</dbReference>
<dbReference type="CDD" id="cd00645">
    <property type="entry name" value="AsnA"/>
    <property type="match status" value="1"/>
</dbReference>
<dbReference type="Gene3D" id="3.30.930.10">
    <property type="entry name" value="Bira Bifunctional Protein, Domain 2"/>
    <property type="match status" value="1"/>
</dbReference>
<dbReference type="HAMAP" id="MF_00555">
    <property type="entry name" value="AsnA"/>
    <property type="match status" value="1"/>
</dbReference>
<dbReference type="InterPro" id="IPR006195">
    <property type="entry name" value="aa-tRNA-synth_II"/>
</dbReference>
<dbReference type="InterPro" id="IPR045864">
    <property type="entry name" value="aa-tRNA-synth_II/BPL/LPL"/>
</dbReference>
<dbReference type="InterPro" id="IPR004618">
    <property type="entry name" value="AsnA"/>
</dbReference>
<dbReference type="NCBIfam" id="TIGR00669">
    <property type="entry name" value="asnA"/>
    <property type="match status" value="1"/>
</dbReference>
<dbReference type="PANTHER" id="PTHR30073">
    <property type="entry name" value="ASPARTATE--AMMONIA LIGASE"/>
    <property type="match status" value="1"/>
</dbReference>
<dbReference type="PANTHER" id="PTHR30073:SF5">
    <property type="entry name" value="ASPARTATE--AMMONIA LIGASE"/>
    <property type="match status" value="1"/>
</dbReference>
<dbReference type="Pfam" id="PF03590">
    <property type="entry name" value="AsnA"/>
    <property type="match status" value="1"/>
</dbReference>
<dbReference type="PIRSF" id="PIRSF001555">
    <property type="entry name" value="Asp_ammon_ligase"/>
    <property type="match status" value="1"/>
</dbReference>
<dbReference type="SUPFAM" id="SSF55681">
    <property type="entry name" value="Class II aaRS and biotin synthetases"/>
    <property type="match status" value="1"/>
</dbReference>
<dbReference type="PROSITE" id="PS50862">
    <property type="entry name" value="AA_TRNA_LIGASE_II"/>
    <property type="match status" value="1"/>
</dbReference>
<comment type="catalytic activity">
    <reaction evidence="1">
        <text>L-aspartate + NH4(+) + ATP = L-asparagine + AMP + diphosphate + H(+)</text>
        <dbReference type="Rhea" id="RHEA:11372"/>
        <dbReference type="ChEBI" id="CHEBI:15378"/>
        <dbReference type="ChEBI" id="CHEBI:28938"/>
        <dbReference type="ChEBI" id="CHEBI:29991"/>
        <dbReference type="ChEBI" id="CHEBI:30616"/>
        <dbReference type="ChEBI" id="CHEBI:33019"/>
        <dbReference type="ChEBI" id="CHEBI:58048"/>
        <dbReference type="ChEBI" id="CHEBI:456215"/>
        <dbReference type="EC" id="6.3.1.1"/>
    </reaction>
</comment>
<comment type="pathway">
    <text evidence="1">Amino-acid biosynthesis; L-asparagine biosynthesis; L-asparagine from L-aspartate (ammonia route): step 1/1.</text>
</comment>
<comment type="subcellular location">
    <subcellularLocation>
        <location evidence="1">Cytoplasm</location>
    </subcellularLocation>
</comment>
<comment type="similarity">
    <text evidence="1">Belongs to the class-II aminoacyl-tRNA synthetase family. AsnA subfamily.</text>
</comment>
<sequence>MKKSFIHQQEEISFVKNTFTQYLIAKLDVVEVQGPILSRVGDGMQDNLSGIENPVSVNVLKIPEAQFEVVHSLAKWKRHTLARFGFNEGEGLVVNMKALRPDEDSLDQTHSVYVDQWDWEKVIPDGKRNLAYLKETVETIYKVIRLTELAVEARYDIEAILPKKITFIHTEDLVKRYPDLSPKERENAITKEFGAVFLIGIGGELSDGKPHDGRAPDYDDWTSETEDGYHGLNGDILVWNEQLQSAFELSSMGIRVDEDALKRQVAITGDFDRLEFDWHKSLLNGLFPLTIGGGIGQSRMAMFLLRKKHIGEVQTSVWPQSVRESFDNIL</sequence>
<protein>
    <recommendedName>
        <fullName evidence="1">Aspartate--ammonia ligase</fullName>
        <ecNumber evidence="1">6.3.1.1</ecNumber>
    </recommendedName>
    <alternativeName>
        <fullName evidence="1">Asparagine synthetase A</fullName>
    </alternativeName>
</protein>
<name>ASNA_STRU0</name>
<proteinExistence type="inferred from homology"/>
<accession>B9DUY5</accession>
<keyword id="KW-0028">Amino-acid biosynthesis</keyword>
<keyword id="KW-0061">Asparagine biosynthesis</keyword>
<keyword id="KW-0067">ATP-binding</keyword>
<keyword id="KW-0963">Cytoplasm</keyword>
<keyword id="KW-0436">Ligase</keyword>
<keyword id="KW-0547">Nucleotide-binding</keyword>
<keyword id="KW-1185">Reference proteome</keyword>
<organism>
    <name type="scientific">Streptococcus uberis (strain ATCC BAA-854 / 0140J)</name>
    <dbReference type="NCBI Taxonomy" id="218495"/>
    <lineage>
        <taxon>Bacteria</taxon>
        <taxon>Bacillati</taxon>
        <taxon>Bacillota</taxon>
        <taxon>Bacilli</taxon>
        <taxon>Lactobacillales</taxon>
        <taxon>Streptococcaceae</taxon>
        <taxon>Streptococcus</taxon>
    </lineage>
</organism>